<reference key="1">
    <citation type="journal article" date="2002" name="J. Bacteriol.">
        <title>Whole-genome comparison of Mycobacterium tuberculosis clinical and laboratory strains.</title>
        <authorList>
            <person name="Fleischmann R.D."/>
            <person name="Alland D."/>
            <person name="Eisen J.A."/>
            <person name="Carpenter L."/>
            <person name="White O."/>
            <person name="Peterson J.D."/>
            <person name="DeBoy R.T."/>
            <person name="Dodson R.J."/>
            <person name="Gwinn M.L."/>
            <person name="Haft D.H."/>
            <person name="Hickey E.K."/>
            <person name="Kolonay J.F."/>
            <person name="Nelson W.C."/>
            <person name="Umayam L.A."/>
            <person name="Ermolaeva M.D."/>
            <person name="Salzberg S.L."/>
            <person name="Delcher A."/>
            <person name="Utterback T.R."/>
            <person name="Weidman J.F."/>
            <person name="Khouri H.M."/>
            <person name="Gill J."/>
            <person name="Mikula A."/>
            <person name="Bishai W."/>
            <person name="Jacobs W.R. Jr."/>
            <person name="Venter J.C."/>
            <person name="Fraser C.M."/>
        </authorList>
    </citation>
    <scope>NUCLEOTIDE SEQUENCE [LARGE SCALE GENOMIC DNA]</scope>
    <source>
        <strain>CDC 1551 / Oshkosh</strain>
    </source>
</reference>
<reference key="2">
    <citation type="journal article" date="2003" name="J. Exp. Med.">
        <title>Inhibition of respiration by nitric oxide induces a Mycobacterium tuberculosis dormancy program.</title>
        <authorList>
            <person name="Voskuil M.I."/>
            <person name="Schnappinger D."/>
            <person name="Visconti K.C."/>
            <person name="Harrell M.I."/>
            <person name="Dolganov G.M."/>
            <person name="Sherman D.R."/>
            <person name="Schoolnik G.K."/>
        </authorList>
    </citation>
    <scope>INDUCTION BY NITRIC OXIDE (NO) AND BY HYPOXIA</scope>
    <scope>DORMANCY REGULON</scope>
    <source>
        <strain>CDC 1551 / Oshkosh</strain>
    </source>
</reference>
<feature type="chain" id="PRO_0000428347" description="Oxygen sensor histidine kinase response regulator DevS/DosS">
    <location>
        <begin position="1"/>
        <end position="578"/>
    </location>
</feature>
<feature type="domain" description="GAF 1">
    <location>
        <begin position="63"/>
        <end position="200"/>
    </location>
</feature>
<feature type="domain" description="GAF 2">
    <location>
        <begin position="231"/>
        <end position="369"/>
    </location>
</feature>
<feature type="domain" description="Histidine kinase" evidence="3">
    <location>
        <begin position="383"/>
        <end position="578"/>
    </location>
</feature>
<feature type="binding site" description="axial binding residue" evidence="1">
    <location>
        <position position="149"/>
    </location>
    <ligand>
        <name>heme</name>
        <dbReference type="ChEBI" id="CHEBI:30413"/>
    </ligand>
    <ligandPart>
        <name>Fe</name>
        <dbReference type="ChEBI" id="CHEBI:18248"/>
    </ligandPart>
</feature>
<feature type="modified residue" description="Phosphohistidine; by autocatalysis" evidence="3">
    <location>
        <position position="395"/>
    </location>
</feature>
<proteinExistence type="evidence at transcript level"/>
<accession>P9WGK2</accession>
<accession>L0TBM4</accession>
<accession>P95194</accession>
<accession>Q79CX7</accession>
<accession>Q7D626</accession>
<gene>
    <name type="primary">devS</name>
    <name type="synonym">dosS</name>
    <name type="ordered locus">MT3218</name>
</gene>
<comment type="function">
    <text evidence="2 4">Member of the two-component regulatory system DevR/DevS (DosR/DosS) involved in onset of the dormancy response. Regulates an approximately 48-member regulon (PubMed:12953092). Required for full induction of the DevR (DosR) regulon; acts later than DosT to positively regulate expression of the DevR regulon during adaptation to anaerobiosis (By similarity). Characterized as an oxygen sensor; O(2) acts as a switch, with O(2)-bound Fe(2+) protein inactive in autophosphorylation (By similarity). Has also been suggested to act as a redox sensor, or perhaps as a dual oxygen/redox sensor (By similarity). Donates a phosphate group to transcriptional regulator DevR (DosR) (By similarity).</text>
</comment>
<comment type="catalytic activity">
    <reaction>
        <text>ATP + protein L-histidine = ADP + protein N-phospho-L-histidine.</text>
        <dbReference type="EC" id="2.7.13.3"/>
    </reaction>
</comment>
<comment type="cofactor">
    <cofactor evidence="2">
        <name>Mg(2+)</name>
        <dbReference type="ChEBI" id="CHEBI:18420"/>
    </cofactor>
</comment>
<comment type="cofactor">
    <cofactor evidence="2">
        <name>heme</name>
        <dbReference type="ChEBI" id="CHEBI:30413"/>
    </cofactor>
    <text evidence="2">Binds 1 heme group per monomer.</text>
</comment>
<comment type="subcellular location">
    <subcellularLocation>
        <location evidence="2">Cytoplasm</location>
    </subcellularLocation>
</comment>
<comment type="induction">
    <text evidence="4">A member of the dormancy regulon. Induced in response to reduced oxygen tension (hypoxia) and low levels of nitric oxide (NO).</text>
</comment>
<comment type="miscellaneous">
    <text evidence="5">The dev nomenclature derives from the increased expression (differentially expressed in virulent strain, dev) of these genes in virulent H37Rv versus avirulent H37Ra. The dos nomenclature derives from experiments in M.bovis showing the same genes are essential for dormancy survival.</text>
</comment>
<evidence type="ECO:0000250" key="1"/>
<evidence type="ECO:0000250" key="2">
    <source>
        <dbReference type="UniProtKB" id="P9WGK3"/>
    </source>
</evidence>
<evidence type="ECO:0000255" key="3">
    <source>
        <dbReference type="PROSITE-ProRule" id="PRU00107"/>
    </source>
</evidence>
<evidence type="ECO:0000269" key="4">
    <source>
    </source>
</evidence>
<evidence type="ECO:0000305" key="5"/>
<name>DEVS_MYCTO</name>
<dbReference type="EC" id="2.7.13.3"/>
<dbReference type="EMBL" id="AE000516">
    <property type="protein sequence ID" value="AAK47556.1"/>
    <property type="molecule type" value="Genomic_DNA"/>
</dbReference>
<dbReference type="PIR" id="E70645">
    <property type="entry name" value="E70645"/>
</dbReference>
<dbReference type="RefSeq" id="WP_003899933.1">
    <property type="nucleotide sequence ID" value="NZ_KK341227.1"/>
</dbReference>
<dbReference type="SMR" id="P9WGK2"/>
<dbReference type="KEGG" id="mtc:MT3218"/>
<dbReference type="PATRIC" id="fig|83331.31.peg.3468"/>
<dbReference type="HOGENOM" id="CLU_034370_1_0_11"/>
<dbReference type="EvolutionaryTrace" id="P9WGK2"/>
<dbReference type="Proteomes" id="UP000001020">
    <property type="component" value="Chromosome"/>
</dbReference>
<dbReference type="GO" id="GO:0005737">
    <property type="term" value="C:cytoplasm"/>
    <property type="evidence" value="ECO:0007669"/>
    <property type="project" value="UniProtKB-SubCell"/>
</dbReference>
<dbReference type="GO" id="GO:0016020">
    <property type="term" value="C:membrane"/>
    <property type="evidence" value="ECO:0007669"/>
    <property type="project" value="InterPro"/>
</dbReference>
<dbReference type="GO" id="GO:0046872">
    <property type="term" value="F:metal ion binding"/>
    <property type="evidence" value="ECO:0007669"/>
    <property type="project" value="UniProtKB-KW"/>
</dbReference>
<dbReference type="GO" id="GO:0000155">
    <property type="term" value="F:phosphorelay sensor kinase activity"/>
    <property type="evidence" value="ECO:0007669"/>
    <property type="project" value="InterPro"/>
</dbReference>
<dbReference type="GO" id="GO:0046983">
    <property type="term" value="F:protein dimerization activity"/>
    <property type="evidence" value="ECO:0007669"/>
    <property type="project" value="InterPro"/>
</dbReference>
<dbReference type="CDD" id="cd16917">
    <property type="entry name" value="HATPase_UhpB-NarQ-NarX-like"/>
    <property type="match status" value="1"/>
</dbReference>
<dbReference type="FunFam" id="3.30.450.40:FF:000052">
    <property type="entry name" value="Oxygen sensor histidine kinase response regulator DevS/DosS"/>
    <property type="match status" value="1"/>
</dbReference>
<dbReference type="FunFam" id="3.30.565.10:FF:000146">
    <property type="entry name" value="Oxygen sensor histidine kinase response regulator DevS/DosS"/>
    <property type="match status" value="1"/>
</dbReference>
<dbReference type="FunFam" id="1.20.5.1930:FF:000006">
    <property type="entry name" value="Two component sensor histidine kinase"/>
    <property type="match status" value="1"/>
</dbReference>
<dbReference type="Gene3D" id="1.20.5.1930">
    <property type="match status" value="1"/>
</dbReference>
<dbReference type="Gene3D" id="3.30.450.40">
    <property type="match status" value="2"/>
</dbReference>
<dbReference type="Gene3D" id="3.30.565.10">
    <property type="entry name" value="Histidine kinase-like ATPase, C-terminal domain"/>
    <property type="match status" value="1"/>
</dbReference>
<dbReference type="InterPro" id="IPR003018">
    <property type="entry name" value="GAF"/>
</dbReference>
<dbReference type="InterPro" id="IPR029016">
    <property type="entry name" value="GAF-like_dom_sf"/>
</dbReference>
<dbReference type="InterPro" id="IPR036890">
    <property type="entry name" value="HATPase_C_sf"/>
</dbReference>
<dbReference type="InterPro" id="IPR005467">
    <property type="entry name" value="His_kinase_dom"/>
</dbReference>
<dbReference type="InterPro" id="IPR050482">
    <property type="entry name" value="Sensor_HK_TwoCompSys"/>
</dbReference>
<dbReference type="InterPro" id="IPR011712">
    <property type="entry name" value="Sig_transdc_His_kin_sub3_dim/P"/>
</dbReference>
<dbReference type="PANTHER" id="PTHR24421">
    <property type="entry name" value="NITRATE/NITRITE SENSOR PROTEIN NARX-RELATED"/>
    <property type="match status" value="1"/>
</dbReference>
<dbReference type="PANTHER" id="PTHR24421:SF56">
    <property type="entry name" value="OXYGEN SENSOR HISTIDINE KINASE RESPONSE REGULATOR DOST"/>
    <property type="match status" value="1"/>
</dbReference>
<dbReference type="Pfam" id="PF13185">
    <property type="entry name" value="GAF_2"/>
    <property type="match status" value="2"/>
</dbReference>
<dbReference type="Pfam" id="PF02518">
    <property type="entry name" value="HATPase_c"/>
    <property type="match status" value="1"/>
</dbReference>
<dbReference type="Pfam" id="PF07730">
    <property type="entry name" value="HisKA_3"/>
    <property type="match status" value="1"/>
</dbReference>
<dbReference type="SMART" id="SM00065">
    <property type="entry name" value="GAF"/>
    <property type="match status" value="2"/>
</dbReference>
<dbReference type="SMART" id="SM00387">
    <property type="entry name" value="HATPase_c"/>
    <property type="match status" value="1"/>
</dbReference>
<dbReference type="SUPFAM" id="SSF55874">
    <property type="entry name" value="ATPase domain of HSP90 chaperone/DNA topoisomerase II/histidine kinase"/>
    <property type="match status" value="1"/>
</dbReference>
<dbReference type="SUPFAM" id="SSF55781">
    <property type="entry name" value="GAF domain-like"/>
    <property type="match status" value="2"/>
</dbReference>
<dbReference type="PROSITE" id="PS50109">
    <property type="entry name" value="HIS_KIN"/>
    <property type="match status" value="1"/>
</dbReference>
<protein>
    <recommendedName>
        <fullName evidence="5">Oxygen sensor histidine kinase response regulator DevS/DosS</fullName>
        <ecNumber>2.7.13.3</ecNumber>
    </recommendedName>
</protein>
<organism>
    <name type="scientific">Mycobacterium tuberculosis (strain CDC 1551 / Oshkosh)</name>
    <dbReference type="NCBI Taxonomy" id="83331"/>
    <lineage>
        <taxon>Bacteria</taxon>
        <taxon>Bacillati</taxon>
        <taxon>Actinomycetota</taxon>
        <taxon>Actinomycetes</taxon>
        <taxon>Mycobacteriales</taxon>
        <taxon>Mycobacteriaceae</taxon>
        <taxon>Mycobacterium</taxon>
        <taxon>Mycobacterium tuberculosis complex</taxon>
    </lineage>
</organism>
<sequence>MTTGGLVDENDGAAMRPLRHTLSQLRLHELLVEVQDRVEQIVEGRDRLDGLVEAMLVVTAGLDLEATLRAIVHSATSLVDARYGAMEVHDRQHRVLHFVYEGIDEETVRRIGHLPKGLGVIGLLIEDPKPLRLDDVSAHPASIGFPPYHPPMRTFLGVPVRVRDESFGTLYLTDKTNGQPFSDDDEVLVQALAAAAGIAVANARLYQQAKARQSWIEATRDIATELLSGTEPATVFRLVAAEALKLTAADAALVAVPVDEDMPAADVGELLVIETVGSAVASIVGRTIPVAGAVLREVFVNGIPRRVDRVDLEGLDELADAGPALLLPLRARGTVAGVVVVLSQGGPGAFTDEQLEMMAAFADQAALAWQLATSQRRMRELDVLTDRDRIARDLHDHVIQRLFAIGLALQGAVPHERNPEVQQRLSDVVDDLQDVIQEIRTTIYDLHGASQGITRLRQRIDAAVAQFADSGLRTSVQFVGPLSVVDSALADQAEAVVREAVSNAVRHAKASTLTVRVKVDDDLCIEVTDNGRGLPDEFTGSGLTNLRQRAEQAGGEFTLASVPGASGTVLRWSAPLSQ</sequence>
<keyword id="KW-0963">Cytoplasm</keyword>
<keyword id="KW-0349">Heme</keyword>
<keyword id="KW-0408">Iron</keyword>
<keyword id="KW-0418">Kinase</keyword>
<keyword id="KW-0460">Magnesium</keyword>
<keyword id="KW-0479">Metal-binding</keyword>
<keyword id="KW-0597">Phosphoprotein</keyword>
<keyword id="KW-1185">Reference proteome</keyword>
<keyword id="KW-0677">Repeat</keyword>
<keyword id="KW-0808">Transferase</keyword>
<keyword id="KW-0902">Two-component regulatory system</keyword>